<accession>Q74ZF1</accession>
<evidence type="ECO:0000250" key="1"/>
<evidence type="ECO:0000305" key="2"/>
<dbReference type="EMBL" id="AE016820">
    <property type="protein sequence ID" value="AAS54738.1"/>
    <property type="molecule type" value="Genomic_DNA"/>
</dbReference>
<dbReference type="RefSeq" id="NP_986914.1">
    <property type="nucleotide sequence ID" value="NM_211976.1"/>
</dbReference>
<dbReference type="SMR" id="Q74ZF1"/>
<dbReference type="FunCoup" id="Q74ZF1">
    <property type="interactions" value="162"/>
</dbReference>
<dbReference type="STRING" id="284811.Q74ZF1"/>
<dbReference type="EnsemblFungi" id="AAS54738">
    <property type="protein sequence ID" value="AAS54738"/>
    <property type="gene ID" value="AGOS_AGR248C"/>
</dbReference>
<dbReference type="GeneID" id="4623216"/>
<dbReference type="KEGG" id="ago:AGOS_AGR248C"/>
<dbReference type="eggNOG" id="ENOG502S77A">
    <property type="taxonomic scope" value="Eukaryota"/>
</dbReference>
<dbReference type="HOGENOM" id="CLU_130571_0_0_1"/>
<dbReference type="InParanoid" id="Q74ZF1"/>
<dbReference type="OMA" id="WLLTQIP"/>
<dbReference type="OrthoDB" id="203279at2759"/>
<dbReference type="Proteomes" id="UP000000591">
    <property type="component" value="Chromosome VII"/>
</dbReference>
<dbReference type="GO" id="GO:0070847">
    <property type="term" value="C:core mediator complex"/>
    <property type="evidence" value="ECO:0007669"/>
    <property type="project" value="EnsemblFungi"/>
</dbReference>
<dbReference type="GO" id="GO:0016592">
    <property type="term" value="C:mediator complex"/>
    <property type="evidence" value="ECO:0007669"/>
    <property type="project" value="InterPro"/>
</dbReference>
<dbReference type="GO" id="GO:0003712">
    <property type="term" value="F:transcription coregulator activity"/>
    <property type="evidence" value="ECO:0007669"/>
    <property type="project" value="InterPro"/>
</dbReference>
<dbReference type="GO" id="GO:0032968">
    <property type="term" value="P:positive regulation of transcription elongation by RNA polymerase II"/>
    <property type="evidence" value="ECO:0007669"/>
    <property type="project" value="EnsemblFungi"/>
</dbReference>
<dbReference type="GO" id="GO:0060261">
    <property type="term" value="P:positive regulation of transcription initiation by RNA polymerase II"/>
    <property type="evidence" value="ECO:0007669"/>
    <property type="project" value="EnsemblFungi"/>
</dbReference>
<dbReference type="GO" id="GO:0051123">
    <property type="term" value="P:RNA polymerase II preinitiation complex assembly"/>
    <property type="evidence" value="ECO:0007669"/>
    <property type="project" value="EnsemblFungi"/>
</dbReference>
<dbReference type="Gene3D" id="6.10.280.160">
    <property type="entry name" value="Mediator of RNA polymerase II transcription subunit 22"/>
    <property type="match status" value="1"/>
</dbReference>
<dbReference type="InterPro" id="IPR009332">
    <property type="entry name" value="Med22"/>
</dbReference>
<dbReference type="InterPro" id="IPR016530">
    <property type="entry name" value="Med22_Saccharomyce"/>
</dbReference>
<dbReference type="Pfam" id="PF06179">
    <property type="entry name" value="Med22"/>
    <property type="match status" value="1"/>
</dbReference>
<dbReference type="PIRSF" id="PIRSF007936">
    <property type="entry name" value="SRB6"/>
    <property type="match status" value="1"/>
</dbReference>
<sequence length="121" mass="13249">MSNQVLLDKLDRTTESLSQALAQLVKLSSIDRASADSDGDNDGTTDSITSVATNGVMMVHAHTTQLIRGVQDLLVITRAIRETWVLGQIPKKNGDEDAIDYEKCERLLEKAMDDFFGPVAL</sequence>
<name>MED22_EREGS</name>
<keyword id="KW-0010">Activator</keyword>
<keyword id="KW-0539">Nucleus</keyword>
<keyword id="KW-1185">Reference proteome</keyword>
<keyword id="KW-0804">Transcription</keyword>
<keyword id="KW-0805">Transcription regulation</keyword>
<protein>
    <recommendedName>
        <fullName>Mediator of RNA polymerase II transcription subunit 22</fullName>
    </recommendedName>
    <alternativeName>
        <fullName>Mediator complex subunit 22</fullName>
    </alternativeName>
</protein>
<reference key="1">
    <citation type="journal article" date="2004" name="Science">
        <title>The Ashbya gossypii genome as a tool for mapping the ancient Saccharomyces cerevisiae genome.</title>
        <authorList>
            <person name="Dietrich F.S."/>
            <person name="Voegeli S."/>
            <person name="Brachat S."/>
            <person name="Lerch A."/>
            <person name="Gates K."/>
            <person name="Steiner S."/>
            <person name="Mohr C."/>
            <person name="Poehlmann R."/>
            <person name="Luedi P."/>
            <person name="Choi S."/>
            <person name="Wing R.A."/>
            <person name="Flavier A."/>
            <person name="Gaffney T.D."/>
            <person name="Philippsen P."/>
        </authorList>
    </citation>
    <scope>NUCLEOTIDE SEQUENCE [LARGE SCALE GENOMIC DNA]</scope>
    <source>
        <strain>ATCC 10895 / CBS 109.51 / FGSC 9923 / NRRL Y-1056</strain>
    </source>
</reference>
<reference key="2">
    <citation type="journal article" date="2013" name="G3 (Bethesda)">
        <title>Genomes of Ashbya fungi isolated from insects reveal four mating-type loci, numerous translocations, lack of transposons, and distinct gene duplications.</title>
        <authorList>
            <person name="Dietrich F.S."/>
            <person name="Voegeli S."/>
            <person name="Kuo S."/>
            <person name="Philippsen P."/>
        </authorList>
    </citation>
    <scope>GENOME REANNOTATION</scope>
    <source>
        <strain>ATCC 10895 / CBS 109.51 / FGSC 9923 / NRRL Y-1056</strain>
    </source>
</reference>
<proteinExistence type="inferred from homology"/>
<feature type="chain" id="PRO_0000308575" description="Mediator of RNA polymerase II transcription subunit 22">
    <location>
        <begin position="1"/>
        <end position="121"/>
    </location>
</feature>
<gene>
    <name type="primary">SRB6</name>
    <name type="synonym">MED22</name>
    <name type="ordered locus">AGR248C</name>
</gene>
<organism>
    <name type="scientific">Eremothecium gossypii (strain ATCC 10895 / CBS 109.51 / FGSC 9923 / NRRL Y-1056)</name>
    <name type="common">Yeast</name>
    <name type="synonym">Ashbya gossypii</name>
    <dbReference type="NCBI Taxonomy" id="284811"/>
    <lineage>
        <taxon>Eukaryota</taxon>
        <taxon>Fungi</taxon>
        <taxon>Dikarya</taxon>
        <taxon>Ascomycota</taxon>
        <taxon>Saccharomycotina</taxon>
        <taxon>Saccharomycetes</taxon>
        <taxon>Saccharomycetales</taxon>
        <taxon>Saccharomycetaceae</taxon>
        <taxon>Eremothecium</taxon>
    </lineage>
</organism>
<comment type="function">
    <text evidence="1">Component of the Mediator complex, a coactivator involved in the regulated transcription of nearly all RNA polymerase II-dependent genes. Mediator functions as a bridge to convey information from gene-specific regulatory proteins to the basal RNA polymerase II transcription machinery. Mediator is recruited to promoters by direct interactions with regulatory proteins and serves as a scaffold for the assembly of a functional preinitiation complex with RNA polymerase II and the general transcription factors (By similarity).</text>
</comment>
<comment type="subunit">
    <text evidence="1">Component of the Mediator complex.</text>
</comment>
<comment type="subcellular location">
    <subcellularLocation>
        <location evidence="1">Nucleus</location>
    </subcellularLocation>
</comment>
<comment type="similarity">
    <text evidence="2">Belongs to the Mediator complex subunit 22 family.</text>
</comment>